<keyword id="KW-0963">Cytoplasm</keyword>
<keyword id="KW-0328">Glycosyltransferase</keyword>
<keyword id="KW-0660">Purine salvage</keyword>
<keyword id="KW-0808">Transferase</keyword>
<gene>
    <name evidence="1" type="primary">apt</name>
    <name type="ordered locus">FTA_1888</name>
</gene>
<dbReference type="EC" id="2.4.2.7" evidence="1"/>
<dbReference type="EMBL" id="CP000803">
    <property type="protein sequence ID" value="ABU62363.1"/>
    <property type="molecule type" value="Genomic_DNA"/>
</dbReference>
<dbReference type="RefSeq" id="WP_003017312.1">
    <property type="nucleotide sequence ID" value="NC_009749.1"/>
</dbReference>
<dbReference type="SMR" id="A7NEG0"/>
<dbReference type="KEGG" id="fta:FTA_1888"/>
<dbReference type="HOGENOM" id="CLU_063339_3_0_6"/>
<dbReference type="UniPathway" id="UPA00588">
    <property type="reaction ID" value="UER00646"/>
</dbReference>
<dbReference type="GO" id="GO:0005737">
    <property type="term" value="C:cytoplasm"/>
    <property type="evidence" value="ECO:0007669"/>
    <property type="project" value="UniProtKB-SubCell"/>
</dbReference>
<dbReference type="GO" id="GO:0002055">
    <property type="term" value="F:adenine binding"/>
    <property type="evidence" value="ECO:0007669"/>
    <property type="project" value="TreeGrafter"/>
</dbReference>
<dbReference type="GO" id="GO:0003999">
    <property type="term" value="F:adenine phosphoribosyltransferase activity"/>
    <property type="evidence" value="ECO:0007669"/>
    <property type="project" value="UniProtKB-UniRule"/>
</dbReference>
<dbReference type="GO" id="GO:0016208">
    <property type="term" value="F:AMP binding"/>
    <property type="evidence" value="ECO:0007669"/>
    <property type="project" value="TreeGrafter"/>
</dbReference>
<dbReference type="GO" id="GO:0006168">
    <property type="term" value="P:adenine salvage"/>
    <property type="evidence" value="ECO:0007669"/>
    <property type="project" value="InterPro"/>
</dbReference>
<dbReference type="GO" id="GO:0044209">
    <property type="term" value="P:AMP salvage"/>
    <property type="evidence" value="ECO:0007669"/>
    <property type="project" value="UniProtKB-UniRule"/>
</dbReference>
<dbReference type="GO" id="GO:0006166">
    <property type="term" value="P:purine ribonucleoside salvage"/>
    <property type="evidence" value="ECO:0007669"/>
    <property type="project" value="UniProtKB-KW"/>
</dbReference>
<dbReference type="CDD" id="cd06223">
    <property type="entry name" value="PRTases_typeI"/>
    <property type="match status" value="1"/>
</dbReference>
<dbReference type="FunFam" id="3.40.50.2020:FF:000004">
    <property type="entry name" value="Adenine phosphoribosyltransferase"/>
    <property type="match status" value="1"/>
</dbReference>
<dbReference type="Gene3D" id="3.40.50.2020">
    <property type="match status" value="1"/>
</dbReference>
<dbReference type="HAMAP" id="MF_00004">
    <property type="entry name" value="Aden_phosphoribosyltr"/>
    <property type="match status" value="1"/>
</dbReference>
<dbReference type="InterPro" id="IPR005764">
    <property type="entry name" value="Ade_phspho_trans"/>
</dbReference>
<dbReference type="InterPro" id="IPR000836">
    <property type="entry name" value="PRibTrfase_dom"/>
</dbReference>
<dbReference type="InterPro" id="IPR029057">
    <property type="entry name" value="PRTase-like"/>
</dbReference>
<dbReference type="InterPro" id="IPR050054">
    <property type="entry name" value="UPRTase/APRTase"/>
</dbReference>
<dbReference type="NCBIfam" id="TIGR01090">
    <property type="entry name" value="apt"/>
    <property type="match status" value="1"/>
</dbReference>
<dbReference type="NCBIfam" id="NF002634">
    <property type="entry name" value="PRK02304.1-3"/>
    <property type="match status" value="1"/>
</dbReference>
<dbReference type="NCBIfam" id="NF002636">
    <property type="entry name" value="PRK02304.1-5"/>
    <property type="match status" value="1"/>
</dbReference>
<dbReference type="PANTHER" id="PTHR32315">
    <property type="entry name" value="ADENINE PHOSPHORIBOSYLTRANSFERASE"/>
    <property type="match status" value="1"/>
</dbReference>
<dbReference type="PANTHER" id="PTHR32315:SF3">
    <property type="entry name" value="ADENINE PHOSPHORIBOSYLTRANSFERASE"/>
    <property type="match status" value="1"/>
</dbReference>
<dbReference type="Pfam" id="PF00156">
    <property type="entry name" value="Pribosyltran"/>
    <property type="match status" value="1"/>
</dbReference>
<dbReference type="SUPFAM" id="SSF53271">
    <property type="entry name" value="PRTase-like"/>
    <property type="match status" value="1"/>
</dbReference>
<dbReference type="PROSITE" id="PS00103">
    <property type="entry name" value="PUR_PYR_PR_TRANSFER"/>
    <property type="match status" value="1"/>
</dbReference>
<comment type="function">
    <text evidence="1">Catalyzes a salvage reaction resulting in the formation of AMP, that is energically less costly than de novo synthesis.</text>
</comment>
<comment type="catalytic activity">
    <reaction evidence="1">
        <text>AMP + diphosphate = 5-phospho-alpha-D-ribose 1-diphosphate + adenine</text>
        <dbReference type="Rhea" id="RHEA:16609"/>
        <dbReference type="ChEBI" id="CHEBI:16708"/>
        <dbReference type="ChEBI" id="CHEBI:33019"/>
        <dbReference type="ChEBI" id="CHEBI:58017"/>
        <dbReference type="ChEBI" id="CHEBI:456215"/>
        <dbReference type="EC" id="2.4.2.7"/>
    </reaction>
</comment>
<comment type="pathway">
    <text evidence="1">Purine metabolism; AMP biosynthesis via salvage pathway; AMP from adenine: step 1/1.</text>
</comment>
<comment type="subunit">
    <text evidence="1">Homodimer.</text>
</comment>
<comment type="subcellular location">
    <subcellularLocation>
        <location evidence="1">Cytoplasm</location>
    </subcellularLocation>
</comment>
<comment type="similarity">
    <text evidence="1">Belongs to the purine/pyrimidine phosphoribosyltransferase family.</text>
</comment>
<reference key="1">
    <citation type="journal article" date="2009" name="PLoS ONE">
        <title>Complete genome sequence of Francisella tularensis subspecies holarctica FTNF002-00.</title>
        <authorList>
            <person name="Barabote R.D."/>
            <person name="Xie G."/>
            <person name="Brettin T.S."/>
            <person name="Hinrichs S.H."/>
            <person name="Fey P.D."/>
            <person name="Jay J.J."/>
            <person name="Engle J.L."/>
            <person name="Godbole S.D."/>
            <person name="Noronha J.M."/>
            <person name="Scheuermann R.H."/>
            <person name="Zhou L.W."/>
            <person name="Lion C."/>
            <person name="Dempsey M.P."/>
        </authorList>
    </citation>
    <scope>NUCLEOTIDE SEQUENCE [LARGE SCALE GENOMIC DNA]</scope>
    <source>
        <strain>FTNF002-00 / FTA</strain>
    </source>
</reference>
<protein>
    <recommendedName>
        <fullName evidence="1">Adenine phosphoribosyltransferase</fullName>
        <shortName evidence="1">APRT</shortName>
        <ecNumber evidence="1">2.4.2.7</ecNumber>
    </recommendedName>
</protein>
<accession>A7NEG0</accession>
<proteinExistence type="inferred from homology"/>
<sequence length="175" mass="18839">MNLDFIKSKIAAVPDFPKPGIMFRDITPLLADPQGLRKTAEAMAQELKNKGIQPTIIAGTESRGFIFGVALAEVLGLGFVPVRKPGKLPRATYSVKYDLEYGSDSLEIHQDAFKVTDEVLVVDDLLATGGTAKATVDLIEKTQAKVAGLIFVMELDSLGGREVLAGYNVSALIKF</sequence>
<evidence type="ECO:0000255" key="1">
    <source>
        <dbReference type="HAMAP-Rule" id="MF_00004"/>
    </source>
</evidence>
<feature type="chain" id="PRO_1000000283" description="Adenine phosphoribosyltransferase">
    <location>
        <begin position="1"/>
        <end position="175"/>
    </location>
</feature>
<organism>
    <name type="scientific">Francisella tularensis subsp. holarctica (strain FTNF002-00 / FTA)</name>
    <dbReference type="NCBI Taxonomy" id="458234"/>
    <lineage>
        <taxon>Bacteria</taxon>
        <taxon>Pseudomonadati</taxon>
        <taxon>Pseudomonadota</taxon>
        <taxon>Gammaproteobacteria</taxon>
        <taxon>Thiotrichales</taxon>
        <taxon>Francisellaceae</taxon>
        <taxon>Francisella</taxon>
    </lineage>
</organism>
<name>APT_FRATF</name>